<dbReference type="EMBL" id="AF488737">
    <property type="protein sequence ID" value="AAN32897.1"/>
    <property type="molecule type" value="mRNA"/>
</dbReference>
<dbReference type="SMR" id="Q8HZS0"/>
<dbReference type="GlyCosmos" id="Q8HZS0">
    <property type="glycosylation" value="2 sites, No reported glycans"/>
</dbReference>
<dbReference type="GO" id="GO:0005615">
    <property type="term" value="C:extracellular space"/>
    <property type="evidence" value="ECO:0000250"/>
    <property type="project" value="UniProtKB"/>
</dbReference>
<dbReference type="GO" id="GO:0016914">
    <property type="term" value="C:follicle-stimulating hormone complex"/>
    <property type="evidence" value="ECO:0000250"/>
    <property type="project" value="UniProtKB"/>
</dbReference>
<dbReference type="GO" id="GO:0016913">
    <property type="term" value="F:follicle-stimulating hormone activity"/>
    <property type="evidence" value="ECO:0000250"/>
    <property type="project" value="UniProtKB"/>
</dbReference>
<dbReference type="GO" id="GO:0007186">
    <property type="term" value="P:G protein-coupled receptor signaling pathway"/>
    <property type="evidence" value="ECO:0000250"/>
    <property type="project" value="UniProtKB"/>
</dbReference>
<dbReference type="GO" id="GO:0010893">
    <property type="term" value="P:positive regulation of steroid biosynthetic process"/>
    <property type="evidence" value="ECO:0000250"/>
    <property type="project" value="UniProtKB"/>
</dbReference>
<dbReference type="GO" id="GO:0010469">
    <property type="term" value="P:regulation of signaling receptor activity"/>
    <property type="evidence" value="ECO:0000250"/>
    <property type="project" value="UniProtKB"/>
</dbReference>
<dbReference type="GO" id="GO:0006590">
    <property type="term" value="P:thyroid hormone generation"/>
    <property type="evidence" value="ECO:0007669"/>
    <property type="project" value="TreeGrafter"/>
</dbReference>
<dbReference type="FunFam" id="2.10.90.10:FF:000011">
    <property type="entry name" value="Glycoprotein hormones alpha chain"/>
    <property type="match status" value="1"/>
</dbReference>
<dbReference type="Gene3D" id="2.10.90.10">
    <property type="entry name" value="Cystine-knot cytokines"/>
    <property type="match status" value="1"/>
</dbReference>
<dbReference type="InterPro" id="IPR029034">
    <property type="entry name" value="Cystine-knot_cytokine"/>
</dbReference>
<dbReference type="InterPro" id="IPR000476">
    <property type="entry name" value="Glyco_hormone"/>
</dbReference>
<dbReference type="PANTHER" id="PTHR11509">
    <property type="entry name" value="GLYCOPROTEIN HORMONE ALPHA CHAIN"/>
    <property type="match status" value="1"/>
</dbReference>
<dbReference type="PANTHER" id="PTHR11509:SF0">
    <property type="entry name" value="GLYCOPROTEIN HORMONES ALPHA CHAIN"/>
    <property type="match status" value="1"/>
</dbReference>
<dbReference type="Pfam" id="PF00236">
    <property type="entry name" value="Hormone_6"/>
    <property type="match status" value="1"/>
</dbReference>
<dbReference type="PRINTS" id="PR00274">
    <property type="entry name" value="GLYCOHORMONE"/>
</dbReference>
<dbReference type="SMART" id="SM00067">
    <property type="entry name" value="GHA"/>
    <property type="match status" value="1"/>
</dbReference>
<dbReference type="SUPFAM" id="SSF57501">
    <property type="entry name" value="Cystine-knot cytokines"/>
    <property type="match status" value="1"/>
</dbReference>
<dbReference type="PROSITE" id="PS00779">
    <property type="entry name" value="GLYCO_HORMONE_ALPHA_1"/>
    <property type="match status" value="1"/>
</dbReference>
<dbReference type="PROSITE" id="PS00780">
    <property type="entry name" value="GLYCO_HORMONE_ALPHA_2"/>
    <property type="match status" value="1"/>
</dbReference>
<dbReference type="PROSITE" id="PS50277">
    <property type="entry name" value="GLYCO_HORMONE_ALPHA_3"/>
    <property type="match status" value="1"/>
</dbReference>
<comment type="function">
    <text evidence="2">Shared alpha chain of the active heterodimeric glycoprotein hormones thyrotropin/thyroid stimulating hormone/TSH, lutropin/luteinizing hormone/LH and follitropin/follicle stimulating hormone/FSH. These hormones bind specific receptors on target cells that in turn activate downstream signaling pathways.</text>
</comment>
<comment type="subunit">
    <text evidence="2">Heterodimer. The active hormones thyrotropin, lutropin and follitropin are heterodimers composed of CGA, a common alpha chain described here and a unique beta chain which confers their biological specificity to the hormones: TSHB for thyrotropin, LHB for lutropin and FSHB for follitropin.</text>
</comment>
<comment type="subcellular location">
    <subcellularLocation>
        <location evidence="2">Secreted</location>
    </subcellularLocation>
</comment>
<comment type="similarity">
    <text evidence="3">Belongs to the glycoprotein hormones subunit alpha family.</text>
</comment>
<organism>
    <name type="scientific">Ailurus fulgens</name>
    <name type="common">Himalayan red panda</name>
    <dbReference type="NCBI Taxonomy" id="9649"/>
    <lineage>
        <taxon>Eukaryota</taxon>
        <taxon>Metazoa</taxon>
        <taxon>Chordata</taxon>
        <taxon>Craniata</taxon>
        <taxon>Vertebrata</taxon>
        <taxon>Euteleostomi</taxon>
        <taxon>Mammalia</taxon>
        <taxon>Eutheria</taxon>
        <taxon>Laurasiatheria</taxon>
        <taxon>Carnivora</taxon>
        <taxon>Caniformia</taxon>
        <taxon>Musteloidea</taxon>
        <taxon>Ailuridae</taxon>
        <taxon>Ailurus</taxon>
    </lineage>
</organism>
<evidence type="ECO:0000250" key="1"/>
<evidence type="ECO:0000250" key="2">
    <source>
        <dbReference type="UniProtKB" id="P01215"/>
    </source>
</evidence>
<evidence type="ECO:0000305" key="3"/>
<keyword id="KW-1015">Disulfide bond</keyword>
<keyword id="KW-0325">Glycoprotein</keyword>
<keyword id="KW-0372">Hormone</keyword>
<keyword id="KW-0964">Secreted</keyword>
<keyword id="KW-0732">Signal</keyword>
<gene>
    <name type="primary">CGA</name>
</gene>
<protein>
    <recommendedName>
        <fullName>Glycoprotein hormones alpha chain</fullName>
    </recommendedName>
    <alternativeName>
        <fullName>Anterior pituitary glycoprotein hormones common subunit alpha</fullName>
    </alternativeName>
    <alternativeName>
        <fullName>Follicle-stimulating hormone alpha chain</fullName>
        <shortName>FSH-alpha</shortName>
    </alternativeName>
    <alternativeName>
        <fullName>Follitropin alpha chain</fullName>
    </alternativeName>
    <alternativeName>
        <fullName>Luteinizing hormone alpha chain</fullName>
        <shortName>LSH-alpha</shortName>
    </alternativeName>
    <alternativeName>
        <fullName>Lutropin alpha chain</fullName>
    </alternativeName>
    <alternativeName>
        <fullName>Thyroid-stimulating hormone alpha chain</fullName>
        <shortName>TSH-alpha</shortName>
    </alternativeName>
    <alternativeName>
        <fullName>Thyrotropin alpha chain</fullName>
    </alternativeName>
</protein>
<sequence>MDYYRKYAAVILATLSVFLHILHSFPDGEFTMQGCPECKLKENKYFSKLGAPIFQCMGCCFSRAYPTPARSKKTMLVPKNITSEATCCVAKAFTKATVMGNAKVENHTECHCSTCYYHKS</sequence>
<feature type="signal peptide" evidence="1">
    <location>
        <begin position="1"/>
        <end position="24"/>
    </location>
</feature>
<feature type="chain" id="PRO_0000042871" description="Glycoprotein hormones alpha chain">
    <location>
        <begin position="25"/>
        <end position="120"/>
    </location>
</feature>
<feature type="glycosylation site" description="N-linked (GlcNAc...) asparagine" evidence="2">
    <location>
        <position position="80"/>
    </location>
</feature>
<feature type="glycosylation site" description="N-linked (GlcNAc...) asparagine" evidence="2">
    <location>
        <position position="106"/>
    </location>
</feature>
<feature type="disulfide bond" evidence="2">
    <location>
        <begin position="35"/>
        <end position="59"/>
    </location>
</feature>
<feature type="disulfide bond" evidence="2">
    <location>
        <begin position="38"/>
        <end position="88"/>
    </location>
</feature>
<feature type="disulfide bond" evidence="2">
    <location>
        <begin position="56"/>
        <end position="110"/>
    </location>
</feature>
<feature type="disulfide bond" evidence="2">
    <location>
        <begin position="60"/>
        <end position="112"/>
    </location>
</feature>
<feature type="disulfide bond" evidence="2">
    <location>
        <begin position="87"/>
        <end position="115"/>
    </location>
</feature>
<name>GLHA_AILFU</name>
<reference key="1">
    <citation type="submission" date="2002-02" db="EMBL/GenBank/DDBJ databases">
        <title>The lesser panda glycoprotein hormone common alpha subunit.</title>
        <authorList>
            <person name="Liao M.J."/>
            <person name="Zhu M.Y."/>
            <person name="Zhang A.J."/>
        </authorList>
    </citation>
    <scope>NUCLEOTIDE SEQUENCE [MRNA]</scope>
    <source>
        <tissue>Pituitary</tissue>
    </source>
</reference>
<proteinExistence type="evidence at transcript level"/>
<accession>Q8HZS0</accession>